<accession>B4SZ98</accession>
<proteinExistence type="inferred from homology"/>
<organism>
    <name type="scientific">Salmonella newport (strain SL254)</name>
    <dbReference type="NCBI Taxonomy" id="423368"/>
    <lineage>
        <taxon>Bacteria</taxon>
        <taxon>Pseudomonadati</taxon>
        <taxon>Pseudomonadota</taxon>
        <taxon>Gammaproteobacteria</taxon>
        <taxon>Enterobacterales</taxon>
        <taxon>Enterobacteriaceae</taxon>
        <taxon>Salmonella</taxon>
    </lineage>
</organism>
<feature type="chain" id="PRO_1000116003" description="Probable GTP-binding protein EngB">
    <location>
        <begin position="1"/>
        <end position="210"/>
    </location>
</feature>
<feature type="domain" description="EngB-type G" evidence="1">
    <location>
        <begin position="25"/>
        <end position="199"/>
    </location>
</feature>
<feature type="binding site" evidence="1">
    <location>
        <begin position="33"/>
        <end position="40"/>
    </location>
    <ligand>
        <name>GTP</name>
        <dbReference type="ChEBI" id="CHEBI:37565"/>
    </ligand>
</feature>
<feature type="binding site" evidence="1">
    <location>
        <position position="40"/>
    </location>
    <ligand>
        <name>Mg(2+)</name>
        <dbReference type="ChEBI" id="CHEBI:18420"/>
    </ligand>
</feature>
<feature type="binding site" evidence="1">
    <location>
        <begin position="60"/>
        <end position="64"/>
    </location>
    <ligand>
        <name>GTP</name>
        <dbReference type="ChEBI" id="CHEBI:37565"/>
    </ligand>
</feature>
<feature type="binding site" evidence="1">
    <location>
        <position position="62"/>
    </location>
    <ligand>
        <name>Mg(2+)</name>
        <dbReference type="ChEBI" id="CHEBI:18420"/>
    </ligand>
</feature>
<feature type="binding site" evidence="1">
    <location>
        <begin position="78"/>
        <end position="81"/>
    </location>
    <ligand>
        <name>GTP</name>
        <dbReference type="ChEBI" id="CHEBI:37565"/>
    </ligand>
</feature>
<feature type="binding site" evidence="1">
    <location>
        <begin position="145"/>
        <end position="148"/>
    </location>
    <ligand>
        <name>GTP</name>
        <dbReference type="ChEBI" id="CHEBI:37565"/>
    </ligand>
</feature>
<feature type="binding site" evidence="1">
    <location>
        <begin position="178"/>
        <end position="180"/>
    </location>
    <ligand>
        <name>GTP</name>
        <dbReference type="ChEBI" id="CHEBI:37565"/>
    </ligand>
</feature>
<reference key="1">
    <citation type="journal article" date="2011" name="J. Bacteriol.">
        <title>Comparative genomics of 28 Salmonella enterica isolates: evidence for CRISPR-mediated adaptive sublineage evolution.</title>
        <authorList>
            <person name="Fricke W.F."/>
            <person name="Mammel M.K."/>
            <person name="McDermott P.F."/>
            <person name="Tartera C."/>
            <person name="White D.G."/>
            <person name="Leclerc J.E."/>
            <person name="Ravel J."/>
            <person name="Cebula T.A."/>
        </authorList>
    </citation>
    <scope>NUCLEOTIDE SEQUENCE [LARGE SCALE GENOMIC DNA]</scope>
    <source>
        <strain>SL254</strain>
    </source>
</reference>
<evidence type="ECO:0000255" key="1">
    <source>
        <dbReference type="HAMAP-Rule" id="MF_00321"/>
    </source>
</evidence>
<name>ENGB_SALNS</name>
<comment type="function">
    <text evidence="1">Necessary for normal cell division and for the maintenance of normal septation.</text>
</comment>
<comment type="cofactor">
    <cofactor evidence="1">
        <name>Mg(2+)</name>
        <dbReference type="ChEBI" id="CHEBI:18420"/>
    </cofactor>
</comment>
<comment type="similarity">
    <text evidence="1">Belongs to the TRAFAC class TrmE-Era-EngA-EngB-Septin-like GTPase superfamily. EngB GTPase family.</text>
</comment>
<dbReference type="EMBL" id="CP001113">
    <property type="protein sequence ID" value="ACF62282.1"/>
    <property type="molecule type" value="Genomic_DNA"/>
</dbReference>
<dbReference type="SMR" id="B4SZ98"/>
<dbReference type="KEGG" id="see:SNSL254_A4283"/>
<dbReference type="HOGENOM" id="CLU_033732_1_0_6"/>
<dbReference type="Proteomes" id="UP000008824">
    <property type="component" value="Chromosome"/>
</dbReference>
<dbReference type="GO" id="GO:0005829">
    <property type="term" value="C:cytosol"/>
    <property type="evidence" value="ECO:0007669"/>
    <property type="project" value="TreeGrafter"/>
</dbReference>
<dbReference type="GO" id="GO:0005525">
    <property type="term" value="F:GTP binding"/>
    <property type="evidence" value="ECO:0007669"/>
    <property type="project" value="UniProtKB-UniRule"/>
</dbReference>
<dbReference type="GO" id="GO:0046872">
    <property type="term" value="F:metal ion binding"/>
    <property type="evidence" value="ECO:0007669"/>
    <property type="project" value="UniProtKB-KW"/>
</dbReference>
<dbReference type="GO" id="GO:0000917">
    <property type="term" value="P:division septum assembly"/>
    <property type="evidence" value="ECO:0007669"/>
    <property type="project" value="UniProtKB-KW"/>
</dbReference>
<dbReference type="CDD" id="cd01876">
    <property type="entry name" value="YihA_EngB"/>
    <property type="match status" value="1"/>
</dbReference>
<dbReference type="FunFam" id="3.40.50.300:FF:000098">
    <property type="entry name" value="Probable GTP-binding protein EngB"/>
    <property type="match status" value="1"/>
</dbReference>
<dbReference type="Gene3D" id="3.40.50.300">
    <property type="entry name" value="P-loop containing nucleotide triphosphate hydrolases"/>
    <property type="match status" value="1"/>
</dbReference>
<dbReference type="HAMAP" id="MF_00321">
    <property type="entry name" value="GTPase_EngB"/>
    <property type="match status" value="1"/>
</dbReference>
<dbReference type="InterPro" id="IPR030393">
    <property type="entry name" value="G_ENGB_dom"/>
</dbReference>
<dbReference type="InterPro" id="IPR006073">
    <property type="entry name" value="GTP-bd"/>
</dbReference>
<dbReference type="InterPro" id="IPR019987">
    <property type="entry name" value="GTP-bd_ribosome_bio_YsxC"/>
</dbReference>
<dbReference type="InterPro" id="IPR027417">
    <property type="entry name" value="P-loop_NTPase"/>
</dbReference>
<dbReference type="NCBIfam" id="TIGR03598">
    <property type="entry name" value="GTPase_YsxC"/>
    <property type="match status" value="1"/>
</dbReference>
<dbReference type="PANTHER" id="PTHR11649:SF13">
    <property type="entry name" value="ENGB-TYPE G DOMAIN-CONTAINING PROTEIN"/>
    <property type="match status" value="1"/>
</dbReference>
<dbReference type="PANTHER" id="PTHR11649">
    <property type="entry name" value="MSS1/TRME-RELATED GTP-BINDING PROTEIN"/>
    <property type="match status" value="1"/>
</dbReference>
<dbReference type="Pfam" id="PF01926">
    <property type="entry name" value="MMR_HSR1"/>
    <property type="match status" value="1"/>
</dbReference>
<dbReference type="SUPFAM" id="SSF52540">
    <property type="entry name" value="P-loop containing nucleoside triphosphate hydrolases"/>
    <property type="match status" value="1"/>
</dbReference>
<dbReference type="PROSITE" id="PS51706">
    <property type="entry name" value="G_ENGB"/>
    <property type="match status" value="1"/>
</dbReference>
<protein>
    <recommendedName>
        <fullName evidence="1">Probable GTP-binding protein EngB</fullName>
    </recommendedName>
</protein>
<sequence>MTNLNYQQTHFVMSAPDIRHLPSDCGIEVAFAGRSNAGKSSALNTLTNQKSLARTSKTPGRTQLINLFEVVEGKRLVDLPGYGYAEVPEEMKRKWQRALGEYLEKRQSLQGLVVLMDIRHPLKDLDQQMIQWAVESNIQVLVLLTKADKLASGARKAQLNMVREAVLAFNGDVQVEAFSSLKKQGVDKLRQKLDSWFSELAPVEEIQDGE</sequence>
<keyword id="KW-0131">Cell cycle</keyword>
<keyword id="KW-0132">Cell division</keyword>
<keyword id="KW-0342">GTP-binding</keyword>
<keyword id="KW-0460">Magnesium</keyword>
<keyword id="KW-0479">Metal-binding</keyword>
<keyword id="KW-0547">Nucleotide-binding</keyword>
<keyword id="KW-0717">Septation</keyword>
<gene>
    <name evidence="1" type="primary">engB</name>
    <name type="ordered locus">SNSL254_A4283</name>
</gene>